<dbReference type="EMBL" id="EU168190">
    <property type="protein sequence ID" value="ABV65986.1"/>
    <property type="molecule type" value="Genomic_DNA"/>
</dbReference>
<dbReference type="RefSeq" id="YP_001936380.1">
    <property type="nucleotide sequence ID" value="NC_010772.1"/>
</dbReference>
<dbReference type="SMR" id="B2XT88"/>
<dbReference type="GeneID" id="6335650"/>
<dbReference type="GO" id="GO:0009535">
    <property type="term" value="C:chloroplast thylakoid membrane"/>
    <property type="evidence" value="ECO:0007669"/>
    <property type="project" value="UniProtKB-SubCell"/>
</dbReference>
<dbReference type="GO" id="GO:0045259">
    <property type="term" value="C:proton-transporting ATP synthase complex"/>
    <property type="evidence" value="ECO:0007669"/>
    <property type="project" value="UniProtKB-KW"/>
</dbReference>
<dbReference type="GO" id="GO:0046933">
    <property type="term" value="F:proton-transporting ATP synthase activity, rotational mechanism"/>
    <property type="evidence" value="ECO:0007669"/>
    <property type="project" value="UniProtKB-UniRule"/>
</dbReference>
<dbReference type="HAMAP" id="MF_01398">
    <property type="entry name" value="ATP_synth_b_bprime"/>
    <property type="match status" value="1"/>
</dbReference>
<dbReference type="InterPro" id="IPR002146">
    <property type="entry name" value="ATP_synth_b/b'su_bac/chlpt"/>
</dbReference>
<dbReference type="PANTHER" id="PTHR34264">
    <property type="entry name" value="ATP SYNTHASE SUBUNIT B, CHLOROPLASTIC"/>
    <property type="match status" value="1"/>
</dbReference>
<dbReference type="PANTHER" id="PTHR34264:SF3">
    <property type="entry name" value="ATP SYNTHASE SUBUNIT B, CHLOROPLASTIC"/>
    <property type="match status" value="1"/>
</dbReference>
<dbReference type="Pfam" id="PF00430">
    <property type="entry name" value="ATP-synt_B"/>
    <property type="match status" value="1"/>
</dbReference>
<geneLocation type="chloroplast"/>
<sequence>MENLTNIFLFLSNENEGIQLNTDIFEANIINLALLIVLVINVAKDVLGSILSARKASILDKIEEADKKLNEADKRFTEARLQWSQANIFGEDLEKKTYQRINAFHESQNLKNKDALLREYFSTLVVLDLKNEQVQKQVRNYVMELALIEVYGVFTKLVANKKFQENYSNYSVLLLEKLIGEK</sequence>
<reference key="1">
    <citation type="journal article" date="2008" name="BMC Genomics">
        <title>Chloroplast genome sequencing analysis of Heterosigma akashiwo CCMP452 (West Atlantic) and NIES293 (West Pacific) strains.</title>
        <authorList>
            <person name="Cattolico R.A."/>
            <person name="Jacobs M.A."/>
            <person name="Zhou Y."/>
            <person name="Chang J."/>
            <person name="Duplessis M."/>
            <person name="Lybrand T."/>
            <person name="McKay J."/>
            <person name="Ong H.C."/>
            <person name="Sims E."/>
            <person name="Rocap G."/>
        </authorList>
    </citation>
    <scope>NUCLEOTIDE SEQUENCE [LARGE SCALE GENOMIC DNA]</scope>
</reference>
<gene>
    <name evidence="1" type="primary">atpF</name>
    <name type="ordered locus">Heak293_Cp079</name>
</gene>
<comment type="function">
    <text evidence="1">F(1)F(0) ATP synthase produces ATP from ADP in the presence of a proton or sodium gradient. F-type ATPases consist of two structural domains, F(1) containing the extramembraneous catalytic core and F(0) containing the membrane proton channel, linked together by a central stalk and a peripheral stalk. During catalysis, ATP synthesis in the catalytic domain of F(1) is coupled via a rotary mechanism of the central stalk subunits to proton translocation.</text>
</comment>
<comment type="function">
    <text evidence="1">Component of the F(0) channel, it forms part of the peripheral stalk, linking F(1) to F(0).</text>
</comment>
<comment type="subunit">
    <text evidence="1">F-type ATPases have 2 components, F(1) - the catalytic core - and F(0) - the membrane proton channel. F(1) has five subunits: alpha(3), beta(3), gamma(1), delta(1), epsilon(1). F(0) has four main subunits: a(1), b(1), b'(1) and c(10-14). The alpha and beta chains form an alternating ring which encloses part of the gamma chain. F(1) is attached to F(0) by a central stalk formed by the gamma and epsilon chains, while a peripheral stalk is formed by the delta, b and b' chains.</text>
</comment>
<comment type="subcellular location">
    <subcellularLocation>
        <location evidence="1">Plastid</location>
        <location evidence="1">Chloroplast thylakoid membrane</location>
        <topology evidence="1">Single-pass membrane protein</topology>
    </subcellularLocation>
</comment>
<comment type="miscellaneous">
    <text>In plastids the F-type ATPase is also known as CF(1)CF(0).</text>
</comment>
<comment type="similarity">
    <text evidence="1">Belongs to the ATPase B chain family.</text>
</comment>
<accession>B2XT88</accession>
<name>ATPF_HETA2</name>
<keyword id="KW-0066">ATP synthesis</keyword>
<keyword id="KW-0138">CF(0)</keyword>
<keyword id="KW-0150">Chloroplast</keyword>
<keyword id="KW-0375">Hydrogen ion transport</keyword>
<keyword id="KW-0406">Ion transport</keyword>
<keyword id="KW-0472">Membrane</keyword>
<keyword id="KW-0934">Plastid</keyword>
<keyword id="KW-0793">Thylakoid</keyword>
<keyword id="KW-0812">Transmembrane</keyword>
<keyword id="KW-1133">Transmembrane helix</keyword>
<keyword id="KW-0813">Transport</keyword>
<feature type="chain" id="PRO_0000368992" description="ATP synthase subunit b, chloroplastic">
    <location>
        <begin position="1"/>
        <end position="182"/>
    </location>
</feature>
<feature type="transmembrane region" description="Helical" evidence="1">
    <location>
        <begin position="29"/>
        <end position="47"/>
    </location>
</feature>
<proteinExistence type="inferred from homology"/>
<protein>
    <recommendedName>
        <fullName evidence="1">ATP synthase subunit b, chloroplastic</fullName>
    </recommendedName>
    <alternativeName>
        <fullName evidence="1">ATP synthase F(0) sector subunit b</fullName>
    </alternativeName>
    <alternativeName>
        <fullName evidence="1">ATPase subunit I</fullName>
    </alternativeName>
</protein>
<evidence type="ECO:0000255" key="1">
    <source>
        <dbReference type="HAMAP-Rule" id="MF_01398"/>
    </source>
</evidence>
<organism>
    <name type="scientific">Heterosigma akashiwo (strain NIES-293 / 8280G21-1)</name>
    <dbReference type="NCBI Taxonomy" id="536047"/>
    <lineage>
        <taxon>Eukaryota</taxon>
        <taxon>Sar</taxon>
        <taxon>Stramenopiles</taxon>
        <taxon>Ochrophyta</taxon>
        <taxon>Raphidophyceae</taxon>
        <taxon>Chattonellales</taxon>
        <taxon>Chattonellaceae</taxon>
        <taxon>Heterosigma</taxon>
    </lineage>
</organism>